<dbReference type="EMBL" id="CU329670">
    <property type="protein sequence ID" value="CAA22582.1"/>
    <property type="molecule type" value="Genomic_DNA"/>
</dbReference>
<dbReference type="PIR" id="T38995">
    <property type="entry name" value="T38995"/>
</dbReference>
<dbReference type="RefSeq" id="NP_594621.1">
    <property type="nucleotide sequence ID" value="NM_001020049.2"/>
</dbReference>
<dbReference type="BioGRID" id="279763">
    <property type="interactions" value="3"/>
</dbReference>
<dbReference type="STRING" id="284812.O94440"/>
<dbReference type="iPTMnet" id="O94440"/>
<dbReference type="PaxDb" id="4896-SPAC637.03.1"/>
<dbReference type="EnsemblFungi" id="SPAC637.03.1">
    <property type="protein sequence ID" value="SPAC637.03.1:pep"/>
    <property type="gene ID" value="SPAC637.03"/>
</dbReference>
<dbReference type="KEGG" id="spo:2543340"/>
<dbReference type="PomBase" id="SPAC637.03"/>
<dbReference type="VEuPathDB" id="FungiDB:SPAC637.03"/>
<dbReference type="HOGENOM" id="CLU_1019986_0_0_1"/>
<dbReference type="InParanoid" id="O94440"/>
<dbReference type="OMA" id="IWSILVY"/>
<dbReference type="PhylomeDB" id="O94440"/>
<dbReference type="PRO" id="PR:O94440"/>
<dbReference type="Proteomes" id="UP000002485">
    <property type="component" value="Chromosome I"/>
</dbReference>
<dbReference type="GO" id="GO:0016020">
    <property type="term" value="C:membrane"/>
    <property type="evidence" value="ECO:0000255"/>
    <property type="project" value="PomBase"/>
</dbReference>
<dbReference type="InterPro" id="IPR013920">
    <property type="entry name" value="DUF1774_fun"/>
</dbReference>
<dbReference type="PANTHER" id="PTHR37992:SF1">
    <property type="entry name" value="DUF1774-DOMAIN-CONTAINING PROTEIN"/>
    <property type="match status" value="1"/>
</dbReference>
<dbReference type="PANTHER" id="PTHR37992">
    <property type="entry name" value="EXPRESSED PROTEIN"/>
    <property type="match status" value="1"/>
</dbReference>
<dbReference type="Pfam" id="PF08611">
    <property type="entry name" value="DUF1774"/>
    <property type="match status" value="1"/>
</dbReference>
<organism>
    <name type="scientific">Schizosaccharomyces pombe (strain 972 / ATCC 24843)</name>
    <name type="common">Fission yeast</name>
    <dbReference type="NCBI Taxonomy" id="284812"/>
    <lineage>
        <taxon>Eukaryota</taxon>
        <taxon>Fungi</taxon>
        <taxon>Dikarya</taxon>
        <taxon>Ascomycota</taxon>
        <taxon>Taphrinomycotina</taxon>
        <taxon>Schizosaccharomycetes</taxon>
        <taxon>Schizosaccharomycetales</taxon>
        <taxon>Schizosaccharomycetaceae</taxon>
        <taxon>Schizosaccharomyces</taxon>
    </lineage>
</organism>
<comment type="subcellular location">
    <subcellularLocation>
        <location evidence="2">Membrane</location>
        <topology evidence="2">Multi-pass membrane protein</topology>
    </subcellularLocation>
</comment>
<name>YFE3_SCHPO</name>
<proteinExistence type="predicted"/>
<evidence type="ECO:0000255" key="1"/>
<evidence type="ECO:0000305" key="2"/>
<gene>
    <name type="ORF">SPAC637.03</name>
</gene>
<accession>O94440</accession>
<keyword id="KW-0472">Membrane</keyword>
<keyword id="KW-1185">Reference proteome</keyword>
<keyword id="KW-0812">Transmembrane</keyword>
<keyword id="KW-1133">Transmembrane helix</keyword>
<feature type="chain" id="PRO_0000374021" description="Uncharacterized protein C637.03">
    <location>
        <begin position="1"/>
        <end position="269"/>
    </location>
</feature>
<feature type="transmembrane region" description="Helical" evidence="1">
    <location>
        <begin position="9"/>
        <end position="29"/>
    </location>
</feature>
<feature type="transmembrane region" description="Helical" evidence="1">
    <location>
        <begin position="50"/>
        <end position="70"/>
    </location>
</feature>
<feature type="transmembrane region" description="Helical" evidence="1">
    <location>
        <begin position="82"/>
        <end position="102"/>
    </location>
</feature>
<feature type="transmembrane region" description="Helical" evidence="1">
    <location>
        <begin position="107"/>
        <end position="127"/>
    </location>
</feature>
<feature type="transmembrane region" description="Helical" evidence="1">
    <location>
        <begin position="147"/>
        <end position="167"/>
    </location>
</feature>
<feature type="transmembrane region" description="Helical" evidence="1">
    <location>
        <begin position="173"/>
        <end position="193"/>
    </location>
</feature>
<feature type="transmembrane region" description="Helical" evidence="1">
    <location>
        <begin position="200"/>
        <end position="220"/>
    </location>
</feature>
<feature type="transmembrane region" description="Helical" evidence="1">
    <location>
        <begin position="224"/>
        <end position="244"/>
    </location>
</feature>
<sequence length="269" mass="30600">MQITRESKYIIGLVLALGVSFATLLAHLFTKPSLEWVYNHHATPFFANKFMLGGYLLVEYLSFLLMIVPLLMLGDQVNDFTFSIIHTSIWYNVFVVFTVWAFTREKLYWTAFFSLCLFSSSFTMYGQSLRLRNGFVEMISMKLPSKLVFGKSLWFVVYAFSAALHCTGIGCRVFSNVFIWFFAAMYLVPILGFHDWALSLVSAYLFLSIGIGQMFIHLFALQHIFAFIIAGLMTLFAALLFLLPYRQRRAALTGESAPLLQDNNAGPAV</sequence>
<reference key="1">
    <citation type="journal article" date="2002" name="Nature">
        <title>The genome sequence of Schizosaccharomyces pombe.</title>
        <authorList>
            <person name="Wood V."/>
            <person name="Gwilliam R."/>
            <person name="Rajandream M.A."/>
            <person name="Lyne M.H."/>
            <person name="Lyne R."/>
            <person name="Stewart A."/>
            <person name="Sgouros J.G."/>
            <person name="Peat N."/>
            <person name="Hayles J."/>
            <person name="Baker S.G."/>
            <person name="Basham D."/>
            <person name="Bowman S."/>
            <person name="Brooks K."/>
            <person name="Brown D."/>
            <person name="Brown S."/>
            <person name="Chillingworth T."/>
            <person name="Churcher C.M."/>
            <person name="Collins M."/>
            <person name="Connor R."/>
            <person name="Cronin A."/>
            <person name="Davis P."/>
            <person name="Feltwell T."/>
            <person name="Fraser A."/>
            <person name="Gentles S."/>
            <person name="Goble A."/>
            <person name="Hamlin N."/>
            <person name="Harris D.E."/>
            <person name="Hidalgo J."/>
            <person name="Hodgson G."/>
            <person name="Holroyd S."/>
            <person name="Hornsby T."/>
            <person name="Howarth S."/>
            <person name="Huckle E.J."/>
            <person name="Hunt S."/>
            <person name="Jagels K."/>
            <person name="James K.D."/>
            <person name="Jones L."/>
            <person name="Jones M."/>
            <person name="Leather S."/>
            <person name="McDonald S."/>
            <person name="McLean J."/>
            <person name="Mooney P."/>
            <person name="Moule S."/>
            <person name="Mungall K.L."/>
            <person name="Murphy L.D."/>
            <person name="Niblett D."/>
            <person name="Odell C."/>
            <person name="Oliver K."/>
            <person name="O'Neil S."/>
            <person name="Pearson D."/>
            <person name="Quail M.A."/>
            <person name="Rabbinowitsch E."/>
            <person name="Rutherford K.M."/>
            <person name="Rutter S."/>
            <person name="Saunders D."/>
            <person name="Seeger K."/>
            <person name="Sharp S."/>
            <person name="Skelton J."/>
            <person name="Simmonds M.N."/>
            <person name="Squares R."/>
            <person name="Squares S."/>
            <person name="Stevens K."/>
            <person name="Taylor K."/>
            <person name="Taylor R.G."/>
            <person name="Tivey A."/>
            <person name="Walsh S.V."/>
            <person name="Warren T."/>
            <person name="Whitehead S."/>
            <person name="Woodward J.R."/>
            <person name="Volckaert G."/>
            <person name="Aert R."/>
            <person name="Robben J."/>
            <person name="Grymonprez B."/>
            <person name="Weltjens I."/>
            <person name="Vanstreels E."/>
            <person name="Rieger M."/>
            <person name="Schaefer M."/>
            <person name="Mueller-Auer S."/>
            <person name="Gabel C."/>
            <person name="Fuchs M."/>
            <person name="Duesterhoeft A."/>
            <person name="Fritzc C."/>
            <person name="Holzer E."/>
            <person name="Moestl D."/>
            <person name="Hilbert H."/>
            <person name="Borzym K."/>
            <person name="Langer I."/>
            <person name="Beck A."/>
            <person name="Lehrach H."/>
            <person name="Reinhardt R."/>
            <person name="Pohl T.M."/>
            <person name="Eger P."/>
            <person name="Zimmermann W."/>
            <person name="Wedler H."/>
            <person name="Wambutt R."/>
            <person name="Purnelle B."/>
            <person name="Goffeau A."/>
            <person name="Cadieu E."/>
            <person name="Dreano S."/>
            <person name="Gloux S."/>
            <person name="Lelaure V."/>
            <person name="Mottier S."/>
            <person name="Galibert F."/>
            <person name="Aves S.J."/>
            <person name="Xiang Z."/>
            <person name="Hunt C."/>
            <person name="Moore K."/>
            <person name="Hurst S.M."/>
            <person name="Lucas M."/>
            <person name="Rochet M."/>
            <person name="Gaillardin C."/>
            <person name="Tallada V.A."/>
            <person name="Garzon A."/>
            <person name="Thode G."/>
            <person name="Daga R.R."/>
            <person name="Cruzado L."/>
            <person name="Jimenez J."/>
            <person name="Sanchez M."/>
            <person name="del Rey F."/>
            <person name="Benito J."/>
            <person name="Dominguez A."/>
            <person name="Revuelta J.L."/>
            <person name="Moreno S."/>
            <person name="Armstrong J."/>
            <person name="Forsburg S.L."/>
            <person name="Cerutti L."/>
            <person name="Lowe T."/>
            <person name="McCombie W.R."/>
            <person name="Paulsen I."/>
            <person name="Potashkin J."/>
            <person name="Shpakovski G.V."/>
            <person name="Ussery D."/>
            <person name="Barrell B.G."/>
            <person name="Nurse P."/>
        </authorList>
    </citation>
    <scope>NUCLEOTIDE SEQUENCE [LARGE SCALE GENOMIC DNA]</scope>
    <source>
        <strain>972 / ATCC 24843</strain>
    </source>
</reference>
<protein>
    <recommendedName>
        <fullName>Uncharacterized protein C637.03</fullName>
    </recommendedName>
</protein>